<proteinExistence type="evidence at protein level"/>
<organism>
    <name type="scientific">Saccharomyces cerevisiae (strain ATCC 204508 / S288c)</name>
    <name type="common">Baker's yeast</name>
    <dbReference type="NCBI Taxonomy" id="559292"/>
    <lineage>
        <taxon>Eukaryota</taxon>
        <taxon>Fungi</taxon>
        <taxon>Dikarya</taxon>
        <taxon>Ascomycota</taxon>
        <taxon>Saccharomycotina</taxon>
        <taxon>Saccharomycetes</taxon>
        <taxon>Saccharomycetales</taxon>
        <taxon>Saccharomycetaceae</taxon>
        <taxon>Saccharomyces</taxon>
    </lineage>
</organism>
<gene>
    <name type="primary">EBP2</name>
    <name type="ordered locus">YKL172W</name>
    <name type="ORF">YKL636</name>
</gene>
<keyword id="KW-0002">3D-structure</keyword>
<keyword id="KW-0175">Coiled coil</keyword>
<keyword id="KW-0539">Nucleus</keyword>
<keyword id="KW-0597">Phosphoprotein</keyword>
<keyword id="KW-1185">Reference proteome</keyword>
<keyword id="KW-0690">Ribosome biogenesis</keyword>
<keyword id="KW-0832">Ubl conjugation</keyword>
<reference key="1">
    <citation type="journal article" date="1994" name="Yeast">
        <title>Sequencing and analysis of a 20.5 kb DNA segment located on the left arm of yeast chromosome XI.</title>
        <authorList>
            <person name="Vandenbol M."/>
            <person name="Bolle P.-A."/>
            <person name="Dion C."/>
            <person name="Portetelle D."/>
            <person name="Hilger F."/>
        </authorList>
    </citation>
    <scope>NUCLEOTIDE SEQUENCE [GENOMIC DNA]</scope>
    <source>
        <strain>ATCC 204508 / S288c</strain>
    </source>
</reference>
<reference key="2">
    <citation type="journal article" date="1994" name="Nature">
        <title>Complete DNA sequence of yeast chromosome XI.</title>
        <authorList>
            <person name="Dujon B."/>
            <person name="Alexandraki D."/>
            <person name="Andre B."/>
            <person name="Ansorge W."/>
            <person name="Baladron V."/>
            <person name="Ballesta J.P.G."/>
            <person name="Banrevi A."/>
            <person name="Bolle P.-A."/>
            <person name="Bolotin-Fukuhara M."/>
            <person name="Bossier P."/>
            <person name="Bou G."/>
            <person name="Boyer J."/>
            <person name="Buitrago M.J."/>
            <person name="Cheret G."/>
            <person name="Colleaux L."/>
            <person name="Daignan-Fornier B."/>
            <person name="del Rey F."/>
            <person name="Dion C."/>
            <person name="Domdey H."/>
            <person name="Duesterhoeft A."/>
            <person name="Duesterhus S."/>
            <person name="Entian K.-D."/>
            <person name="Erfle H."/>
            <person name="Esteban P.F."/>
            <person name="Feldmann H."/>
            <person name="Fernandes L."/>
            <person name="Fobo G.M."/>
            <person name="Fritz C."/>
            <person name="Fukuhara H."/>
            <person name="Gabel C."/>
            <person name="Gaillon L."/>
            <person name="Garcia-Cantalejo J.M."/>
            <person name="Garcia-Ramirez J.J."/>
            <person name="Gent M.E."/>
            <person name="Ghazvini M."/>
            <person name="Goffeau A."/>
            <person name="Gonzalez A."/>
            <person name="Grothues D."/>
            <person name="Guerreiro P."/>
            <person name="Hegemann J.H."/>
            <person name="Hewitt N."/>
            <person name="Hilger F."/>
            <person name="Hollenberg C.P."/>
            <person name="Horaitis O."/>
            <person name="Indge K.J."/>
            <person name="Jacquier A."/>
            <person name="James C.M."/>
            <person name="Jauniaux J.-C."/>
            <person name="Jimenez A."/>
            <person name="Keuchel H."/>
            <person name="Kirchrath L."/>
            <person name="Kleine K."/>
            <person name="Koetter P."/>
            <person name="Legrain P."/>
            <person name="Liebl S."/>
            <person name="Louis E.J."/>
            <person name="Maia e Silva A."/>
            <person name="Marck C."/>
            <person name="Monnier A.-L."/>
            <person name="Moestl D."/>
            <person name="Mueller S."/>
            <person name="Obermaier B."/>
            <person name="Oliver S.G."/>
            <person name="Pallier C."/>
            <person name="Pascolo S."/>
            <person name="Pfeiffer F."/>
            <person name="Philippsen P."/>
            <person name="Planta R.J."/>
            <person name="Pohl F.M."/>
            <person name="Pohl T.M."/>
            <person name="Poehlmann R."/>
            <person name="Portetelle D."/>
            <person name="Purnelle B."/>
            <person name="Puzos V."/>
            <person name="Ramezani Rad M."/>
            <person name="Rasmussen S.W."/>
            <person name="Remacha M.A."/>
            <person name="Revuelta J.L."/>
            <person name="Richard G.-F."/>
            <person name="Rieger M."/>
            <person name="Rodrigues-Pousada C."/>
            <person name="Rose M."/>
            <person name="Rupp T."/>
            <person name="Santos M.A."/>
            <person name="Schwager C."/>
            <person name="Sensen C."/>
            <person name="Skala J."/>
            <person name="Soares H."/>
            <person name="Sor F."/>
            <person name="Stegemann J."/>
            <person name="Tettelin H."/>
            <person name="Thierry A."/>
            <person name="Tzermia M."/>
            <person name="Urrestarazu L.A."/>
            <person name="van Dyck L."/>
            <person name="van Vliet-Reedijk J.C."/>
            <person name="Valens M."/>
            <person name="Vandenbol M."/>
            <person name="Vilela C."/>
            <person name="Vissers S."/>
            <person name="von Wettstein D."/>
            <person name="Voss H."/>
            <person name="Wiemann S."/>
            <person name="Xu G."/>
            <person name="Zimmermann J."/>
            <person name="Haasemann M."/>
            <person name="Becker I."/>
            <person name="Mewes H.-W."/>
        </authorList>
    </citation>
    <scope>NUCLEOTIDE SEQUENCE [LARGE SCALE GENOMIC DNA]</scope>
    <source>
        <strain>ATCC 204508 / S288c</strain>
    </source>
</reference>
<reference key="3">
    <citation type="journal article" date="2014" name="G3 (Bethesda)">
        <title>The reference genome sequence of Saccharomyces cerevisiae: Then and now.</title>
        <authorList>
            <person name="Engel S.R."/>
            <person name="Dietrich F.S."/>
            <person name="Fisk D.G."/>
            <person name="Binkley G."/>
            <person name="Balakrishnan R."/>
            <person name="Costanzo M.C."/>
            <person name="Dwight S.S."/>
            <person name="Hitz B.C."/>
            <person name="Karra K."/>
            <person name="Nash R.S."/>
            <person name="Weng S."/>
            <person name="Wong E.D."/>
            <person name="Lloyd P."/>
            <person name="Skrzypek M.S."/>
            <person name="Miyasato S.R."/>
            <person name="Simison M."/>
            <person name="Cherry J.M."/>
        </authorList>
    </citation>
    <scope>GENOME REANNOTATION</scope>
    <source>
        <strain>ATCC 204508 / S288c</strain>
    </source>
</reference>
<reference key="4">
    <citation type="journal article" date="2000" name="Genes Cells">
        <title>Ebp2p, yeast homologue of a human protein that interacts with Epstein-Barr virus nuclear antigen 1, is required for pre-rRNA processing and ribosomal subunit assembly.</title>
        <authorList>
            <person name="Tsujii R."/>
            <person name="Miyoshi K."/>
            <person name="Tsuno A."/>
            <person name="Matsui Y."/>
            <person name="Toh-e A."/>
            <person name="Miyakawa T."/>
            <person name="Mizuta K."/>
        </authorList>
    </citation>
    <scope>FUNCTION</scope>
    <scope>SUBCELLULAR LOCATION</scope>
</reference>
<reference key="5">
    <citation type="journal article" date="2000" name="J. Biol. Chem.">
        <title>The budding yeast homolog of the human EBNA1-binding protein 2 (Ebp2p) is an essential nucleolar protein required for pre-rRNA processing.</title>
        <authorList>
            <person name="Huber M.D."/>
            <person name="Dworet J.H."/>
            <person name="Shire K."/>
            <person name="Frappier L."/>
            <person name="McAlear M.A."/>
        </authorList>
    </citation>
    <scope>FUNCTION</scope>
    <scope>SUBCELLULAR LOCATION</scope>
</reference>
<reference key="6">
    <citation type="journal article" date="2007" name="J. Proteome Res.">
        <title>Large-scale phosphorylation analysis of alpha-factor-arrested Saccharomyces cerevisiae.</title>
        <authorList>
            <person name="Li X."/>
            <person name="Gerber S.A."/>
            <person name="Rudner A.D."/>
            <person name="Beausoleil S.A."/>
            <person name="Haas W."/>
            <person name="Villen J."/>
            <person name="Elias J.E."/>
            <person name="Gygi S.P."/>
        </authorList>
    </citation>
    <scope>PHOSPHORYLATION [LARGE SCALE ANALYSIS] AT SER-104; SER-177 AND SER-183</scope>
    <scope>IDENTIFICATION BY MASS SPECTROMETRY [LARGE SCALE ANALYSIS]</scope>
    <source>
        <strain>ADR376</strain>
    </source>
</reference>
<reference key="7">
    <citation type="journal article" date="2008" name="Biosci. Biotechnol. Biochem.">
        <title>SUMO mediates interaction of Ebp2p, the yeast homolog of Epstein-Barr virus nuclear antigen 1-binding protein 2, with a RING finger protein Ris1p.</title>
        <authorList>
            <person name="Shirai C."/>
            <person name="Mizuta K."/>
        </authorList>
    </citation>
    <scope>INTERACTION WITH LOC1; NOP12; SIZ2; ULS1 AND WSS1</scope>
    <scope>SUMOYLATION</scope>
    <scope>MUTAGENESIS OF 36-LYS-LYS-37 AND 61-LYS-LYS-62</scope>
</reference>
<reference key="8">
    <citation type="journal article" date="2009" name="Science">
        <title>Global analysis of Cdk1 substrate phosphorylation sites provides insights into evolution.</title>
        <authorList>
            <person name="Holt L.J."/>
            <person name="Tuch B.B."/>
            <person name="Villen J."/>
            <person name="Johnson A.D."/>
            <person name="Gygi S.P."/>
            <person name="Morgan D.O."/>
        </authorList>
    </citation>
    <scope>PHOSPHORYLATION [LARGE SCALE ANALYSIS] AT SER-104; SER-177 AND SER-183</scope>
    <scope>IDENTIFICATION BY MASS SPECTROMETRY [LARGE SCALE ANALYSIS]</scope>
</reference>
<protein>
    <recommendedName>
        <fullName>rRNA-processing protein EBP2</fullName>
    </recommendedName>
    <alternativeName>
        <fullName>EBNA1-binding protein homolog</fullName>
    </alternativeName>
</protein>
<dbReference type="EMBL" id="Z26878">
    <property type="protein sequence ID" value="CAA81515.1"/>
    <property type="molecule type" value="Genomic_DNA"/>
</dbReference>
<dbReference type="EMBL" id="Z28172">
    <property type="protein sequence ID" value="CAA82014.1"/>
    <property type="molecule type" value="Genomic_DNA"/>
</dbReference>
<dbReference type="EMBL" id="BK006944">
    <property type="protein sequence ID" value="DAA08994.1"/>
    <property type="molecule type" value="Genomic_DNA"/>
</dbReference>
<dbReference type="PIR" id="S38002">
    <property type="entry name" value="S38002"/>
</dbReference>
<dbReference type="RefSeq" id="NP_012749.1">
    <property type="nucleotide sequence ID" value="NM_001179738.1"/>
</dbReference>
<dbReference type="PDB" id="5Z1G">
    <property type="method" value="X-ray"/>
    <property type="resolution" value="2.29 A"/>
    <property type="chains" value="A/C=186-295"/>
</dbReference>
<dbReference type="PDB" id="5Z3G">
    <property type="method" value="EM"/>
    <property type="resolution" value="3.65 A"/>
    <property type="chains" value="b=1-427"/>
</dbReference>
<dbReference type="PDB" id="6ELZ">
    <property type="method" value="EM"/>
    <property type="resolution" value="3.30 A"/>
    <property type="chains" value="J=1-427"/>
</dbReference>
<dbReference type="PDB" id="6EM1">
    <property type="method" value="EM"/>
    <property type="resolution" value="3.60 A"/>
    <property type="chains" value="J=1-427"/>
</dbReference>
<dbReference type="PDB" id="6EM3">
    <property type="method" value="EM"/>
    <property type="resolution" value="3.20 A"/>
    <property type="chains" value="J=1-427"/>
</dbReference>
<dbReference type="PDB" id="6EM4">
    <property type="method" value="EM"/>
    <property type="resolution" value="4.10 A"/>
    <property type="chains" value="J=1-427"/>
</dbReference>
<dbReference type="PDB" id="6EM5">
    <property type="method" value="EM"/>
    <property type="resolution" value="4.30 A"/>
    <property type="chains" value="J=1-427"/>
</dbReference>
<dbReference type="PDB" id="7NAC">
    <property type="method" value="EM"/>
    <property type="resolution" value="3.04 A"/>
    <property type="chains" value="J=1-427"/>
</dbReference>
<dbReference type="PDB" id="7OHR">
    <property type="method" value="EM"/>
    <property type="resolution" value="4.72 A"/>
    <property type="chains" value="J=1-427"/>
</dbReference>
<dbReference type="PDB" id="7OHV">
    <property type="method" value="EM"/>
    <property type="resolution" value="3.90 A"/>
    <property type="chains" value="J=1-427"/>
</dbReference>
<dbReference type="PDB" id="7OHW">
    <property type="method" value="EM"/>
    <property type="resolution" value="3.50 A"/>
    <property type="chains" value="J=1-427"/>
</dbReference>
<dbReference type="PDB" id="7R6K">
    <property type="method" value="EM"/>
    <property type="resolution" value="3.17 A"/>
    <property type="chains" value="J=1-427"/>
</dbReference>
<dbReference type="PDB" id="7R7A">
    <property type="method" value="EM"/>
    <property type="resolution" value="3.04 A"/>
    <property type="chains" value="J=1-427"/>
</dbReference>
<dbReference type="PDB" id="7R7C">
    <property type="method" value="EM"/>
    <property type="resolution" value="3.71 A"/>
    <property type="chains" value="J=245-340"/>
</dbReference>
<dbReference type="PDB" id="8E5T">
    <property type="method" value="EM"/>
    <property type="resolution" value="4.00 A"/>
    <property type="chains" value="m=1-427"/>
</dbReference>
<dbReference type="PDB" id="8V83">
    <property type="method" value="EM"/>
    <property type="resolution" value="2.53 A"/>
    <property type="chains" value="J=1-427"/>
</dbReference>
<dbReference type="PDB" id="8V84">
    <property type="method" value="EM"/>
    <property type="resolution" value="2.70 A"/>
    <property type="chains" value="J=1-427"/>
</dbReference>
<dbReference type="PDB" id="8V87">
    <property type="method" value="EM"/>
    <property type="resolution" value="2.66 A"/>
    <property type="chains" value="J=1-427"/>
</dbReference>
<dbReference type="PDBsum" id="5Z1G"/>
<dbReference type="PDBsum" id="5Z3G"/>
<dbReference type="PDBsum" id="6ELZ"/>
<dbReference type="PDBsum" id="6EM1"/>
<dbReference type="PDBsum" id="6EM3"/>
<dbReference type="PDBsum" id="6EM4"/>
<dbReference type="PDBsum" id="6EM5"/>
<dbReference type="PDBsum" id="7NAC"/>
<dbReference type="PDBsum" id="7OHR"/>
<dbReference type="PDBsum" id="7OHV"/>
<dbReference type="PDBsum" id="7OHW"/>
<dbReference type="PDBsum" id="7R6K"/>
<dbReference type="PDBsum" id="7R7A"/>
<dbReference type="PDBsum" id="7R7C"/>
<dbReference type="PDBsum" id="8E5T"/>
<dbReference type="PDBsum" id="8V83"/>
<dbReference type="PDBsum" id="8V84"/>
<dbReference type="PDBsum" id="8V87"/>
<dbReference type="EMDB" id="EMD-12906"/>
<dbReference type="EMDB" id="EMD-12910"/>
<dbReference type="EMDB" id="EMD-12911"/>
<dbReference type="EMDB" id="EMD-24269"/>
<dbReference type="EMDB" id="EMD-24280"/>
<dbReference type="EMDB" id="EMD-24296"/>
<dbReference type="EMDB" id="EMD-27919"/>
<dbReference type="EMDB" id="EMD-43017"/>
<dbReference type="EMDB" id="EMD-43021"/>
<dbReference type="EMDB" id="EMD-43027"/>
<dbReference type="EMDB" id="EMD-6878"/>
<dbReference type="SMR" id="P36049"/>
<dbReference type="BioGRID" id="33966">
    <property type="interactions" value="267"/>
</dbReference>
<dbReference type="DIP" id="DIP-6507N"/>
<dbReference type="FunCoup" id="P36049">
    <property type="interactions" value="482"/>
</dbReference>
<dbReference type="IntAct" id="P36049">
    <property type="interactions" value="81"/>
</dbReference>
<dbReference type="MINT" id="P36049"/>
<dbReference type="STRING" id="4932.YKL172W"/>
<dbReference type="iPTMnet" id="P36049"/>
<dbReference type="PaxDb" id="4932-YKL172W"/>
<dbReference type="PeptideAtlas" id="P36049"/>
<dbReference type="EnsemblFungi" id="YKL172W_mRNA">
    <property type="protein sequence ID" value="YKL172W"/>
    <property type="gene ID" value="YKL172W"/>
</dbReference>
<dbReference type="GeneID" id="853682"/>
<dbReference type="KEGG" id="sce:YKL172W"/>
<dbReference type="AGR" id="SGD:S000001655"/>
<dbReference type="SGD" id="S000001655">
    <property type="gene designation" value="EBP2"/>
</dbReference>
<dbReference type="VEuPathDB" id="FungiDB:YKL172W"/>
<dbReference type="eggNOG" id="KOG3080">
    <property type="taxonomic scope" value="Eukaryota"/>
</dbReference>
<dbReference type="GeneTree" id="ENSGT00390000014984"/>
<dbReference type="HOGENOM" id="CLU_036007_3_1_1"/>
<dbReference type="InParanoid" id="P36049"/>
<dbReference type="OMA" id="DAHKGRD"/>
<dbReference type="OrthoDB" id="443772at2759"/>
<dbReference type="BioCyc" id="YEAST:G3O-31939-MONOMER"/>
<dbReference type="Reactome" id="R-SCE-6791226">
    <property type="pathway name" value="Major pathway of rRNA processing in the nucleolus and cytosol"/>
</dbReference>
<dbReference type="BioGRID-ORCS" id="853682">
    <property type="hits" value="10 hits in 10 CRISPR screens"/>
</dbReference>
<dbReference type="PRO" id="PR:P36049"/>
<dbReference type="Proteomes" id="UP000002311">
    <property type="component" value="Chromosome XI"/>
</dbReference>
<dbReference type="RNAct" id="P36049">
    <property type="molecule type" value="protein"/>
</dbReference>
<dbReference type="GO" id="GO:0034399">
    <property type="term" value="C:nuclear periphery"/>
    <property type="evidence" value="ECO:0000314"/>
    <property type="project" value="SGD"/>
</dbReference>
<dbReference type="GO" id="GO:0005730">
    <property type="term" value="C:nucleolus"/>
    <property type="evidence" value="ECO:0000314"/>
    <property type="project" value="SGD"/>
</dbReference>
<dbReference type="GO" id="GO:0030687">
    <property type="term" value="C:preribosome, large subunit precursor"/>
    <property type="evidence" value="ECO:0000314"/>
    <property type="project" value="SGD"/>
</dbReference>
<dbReference type="GO" id="GO:0042802">
    <property type="term" value="F:identical protein binding"/>
    <property type="evidence" value="ECO:0000353"/>
    <property type="project" value="IntAct"/>
</dbReference>
<dbReference type="GO" id="GO:0003729">
    <property type="term" value="F:mRNA binding"/>
    <property type="evidence" value="ECO:0007005"/>
    <property type="project" value="SGD"/>
</dbReference>
<dbReference type="GO" id="GO:0000280">
    <property type="term" value="P:nuclear division"/>
    <property type="evidence" value="ECO:0000315"/>
    <property type="project" value="SGD"/>
</dbReference>
<dbReference type="GO" id="GO:0042273">
    <property type="term" value="P:ribosomal large subunit biogenesis"/>
    <property type="evidence" value="ECO:0000318"/>
    <property type="project" value="GO_Central"/>
</dbReference>
<dbReference type="GO" id="GO:0006364">
    <property type="term" value="P:rRNA processing"/>
    <property type="evidence" value="ECO:0000315"/>
    <property type="project" value="SGD"/>
</dbReference>
<dbReference type="InterPro" id="IPR008610">
    <property type="entry name" value="Ebp2"/>
</dbReference>
<dbReference type="PANTHER" id="PTHR13028">
    <property type="entry name" value="RRNA PROCESSING PROTEIN EBNA1-BINDING PROTEIN-RELATED"/>
    <property type="match status" value="1"/>
</dbReference>
<dbReference type="PANTHER" id="PTHR13028:SF0">
    <property type="entry name" value="RRNA-PROCESSING PROTEIN EBP2-RELATED"/>
    <property type="match status" value="1"/>
</dbReference>
<dbReference type="Pfam" id="PF05890">
    <property type="entry name" value="Ebp2"/>
    <property type="match status" value="1"/>
</dbReference>
<accession>P36049</accession>
<accession>D6VX28</accession>
<feature type="chain" id="PRO_0000120000" description="rRNA-processing protein EBP2">
    <location>
        <begin position="1"/>
        <end position="427"/>
    </location>
</feature>
<feature type="region of interest" description="Disordered" evidence="2">
    <location>
        <begin position="29"/>
        <end position="190"/>
    </location>
</feature>
<feature type="region of interest" description="Disordered" evidence="2">
    <location>
        <begin position="361"/>
        <end position="427"/>
    </location>
</feature>
<feature type="coiled-coil region" evidence="1">
    <location>
        <begin position="45"/>
        <end position="174"/>
    </location>
</feature>
<feature type="coiled-coil region" evidence="1">
    <location>
        <begin position="234"/>
        <end position="265"/>
    </location>
</feature>
<feature type="coiled-coil region" evidence="1">
    <location>
        <begin position="291"/>
        <end position="348"/>
    </location>
</feature>
<feature type="compositionally biased region" description="Basic and acidic residues" evidence="2">
    <location>
        <begin position="29"/>
        <end position="40"/>
    </location>
</feature>
<feature type="compositionally biased region" description="Basic and acidic residues" evidence="2">
    <location>
        <begin position="49"/>
        <end position="65"/>
    </location>
</feature>
<feature type="compositionally biased region" description="Basic residues" evidence="2">
    <location>
        <begin position="79"/>
        <end position="88"/>
    </location>
</feature>
<feature type="compositionally biased region" description="Basic and acidic residues" evidence="2">
    <location>
        <begin position="89"/>
        <end position="105"/>
    </location>
</feature>
<feature type="compositionally biased region" description="Acidic residues" evidence="2">
    <location>
        <begin position="106"/>
        <end position="126"/>
    </location>
</feature>
<feature type="compositionally biased region" description="Basic and acidic residues" evidence="2">
    <location>
        <begin position="127"/>
        <end position="138"/>
    </location>
</feature>
<feature type="compositionally biased region" description="Acidic residues" evidence="2">
    <location>
        <begin position="139"/>
        <end position="155"/>
    </location>
</feature>
<feature type="compositionally biased region" description="Acidic residues" evidence="2">
    <location>
        <begin position="163"/>
        <end position="185"/>
    </location>
</feature>
<feature type="compositionally biased region" description="Polar residues" evidence="2">
    <location>
        <begin position="397"/>
        <end position="407"/>
    </location>
</feature>
<feature type="compositionally biased region" description="Basic residues" evidence="2">
    <location>
        <begin position="409"/>
        <end position="427"/>
    </location>
</feature>
<feature type="modified residue" description="Phosphoserine" evidence="7 8">
    <location>
        <position position="104"/>
    </location>
</feature>
<feature type="modified residue" description="Phosphoserine" evidence="7 8">
    <location>
        <position position="177"/>
    </location>
</feature>
<feature type="modified residue" description="Phosphoserine" evidence="7 8">
    <location>
        <position position="183"/>
    </location>
</feature>
<feature type="mutagenesis site" description="Reduces sumoylation and impairs interaction with SIZ2, WSS1 and ULS1, when associated with R-61 and R-62." evidence="5">
    <original>KK</original>
    <variation>RR</variation>
    <location>
        <begin position="36"/>
        <end position="37"/>
    </location>
</feature>
<feature type="mutagenesis site" description="Reduces sumoylation and impairs interaction with SIZ2, WSS1 and ULS1, when associated with R-36 and R-37." evidence="5">
    <original>KK</original>
    <variation>RR</variation>
    <location>
        <begin position="61"/>
        <end position="62"/>
    </location>
</feature>
<feature type="helix" evidence="9">
    <location>
        <begin position="198"/>
        <end position="208"/>
    </location>
</feature>
<feature type="helix" evidence="9">
    <location>
        <begin position="212"/>
        <end position="214"/>
    </location>
</feature>
<feature type="helix" evidence="9">
    <location>
        <begin position="217"/>
        <end position="219"/>
    </location>
</feature>
<feature type="strand" evidence="9">
    <location>
        <begin position="222"/>
        <end position="224"/>
    </location>
</feature>
<feature type="helix" evidence="9">
    <location>
        <begin position="239"/>
        <end position="263"/>
    </location>
</feature>
<feature type="strand" evidence="9">
    <location>
        <begin position="278"/>
        <end position="280"/>
    </location>
</feature>
<feature type="helix" evidence="9">
    <location>
        <begin position="282"/>
        <end position="288"/>
    </location>
</feature>
<sequence length="427" mass="49734">MAKGFKLKELLSHQKEIEKAEKLENDLKKKKSQELKKEEPTIVTASNLKKLEKKEKKADVKKEVAADTEEYQSQALSKKEKRKLKKELKKMQEQDATEAQKHMSGDEDESGDDREEEEEEEEEEEGRLDLEKLAKSDSESEDDSESENDSEEDEDVVAKEESEEKEEQEEEQDVPLSDVEFDSDADVVPHHKLTVNNTKAMKHALERVQLPWKKHSFQEHQSVTSETNTDEHIKDIYDDTERELAFYKQSLDAVLVARDELKRLKVPFKRPLDYFAEMVKSDEHMDKIKGKLIEEASDKKAREEARRQRQLKKFGKQVQNATLQKRQLEKRETLEKIKSLKNKRKHNEIDHSEFNVGVEEEVEGKRFDRGRPNGKRAAKNAKYGQGGMKRFKRKNDATSSADVSGFSSRKMKGKTNRPGKSRRARRF</sequence>
<evidence type="ECO:0000255" key="1"/>
<evidence type="ECO:0000256" key="2">
    <source>
        <dbReference type="SAM" id="MobiDB-lite"/>
    </source>
</evidence>
<evidence type="ECO:0000269" key="3">
    <source>
    </source>
</evidence>
<evidence type="ECO:0000269" key="4">
    <source>
    </source>
</evidence>
<evidence type="ECO:0000269" key="5">
    <source>
    </source>
</evidence>
<evidence type="ECO:0000305" key="6"/>
<evidence type="ECO:0007744" key="7">
    <source>
    </source>
</evidence>
<evidence type="ECO:0007744" key="8">
    <source>
    </source>
</evidence>
<evidence type="ECO:0007829" key="9">
    <source>
        <dbReference type="PDB" id="5Z1G"/>
    </source>
</evidence>
<name>EBP2_YEAST</name>
<comment type="function">
    <text evidence="3 4">Required for the processing of the 27S pre-rRNA. Probably involved in the step of the processing of the 27 SA precursor into the 27 SB intermediate.</text>
</comment>
<comment type="subunit">
    <text evidence="5">Interacts with LOC1, NOP12, SIZ2, ULS1 and WSS1.</text>
</comment>
<comment type="interaction">
    <interactant intactId="EBI-6289">
        <id>P36049</id>
    </interactant>
    <interactant intactId="EBI-3775">
        <id>Q08235</id>
        <label>BRX1</label>
    </interactant>
    <organismsDiffer>false</organismsDiffer>
    <experiments>6</experiments>
</comment>
<comment type="interaction">
    <interactant intactId="EBI-6289">
        <id>P36049</id>
    </interactant>
    <interactant intactId="EBI-23731">
        <id>P53188</id>
        <label>CGR1</label>
    </interactant>
    <organismsDiffer>false</organismsDiffer>
    <experiments>3</experiments>
</comment>
<comment type="interaction">
    <interactant intactId="EBI-6289">
        <id>P36049</id>
    </interactant>
    <interactant intactId="EBI-5644">
        <id>Q12389</id>
        <label>DBP10</label>
    </interactant>
    <organismsDiffer>false</organismsDiffer>
    <experiments>4</experiments>
</comment>
<comment type="interaction">
    <interactant intactId="EBI-6289">
        <id>P36049</id>
    </interactant>
    <interactant intactId="EBI-5640">
        <id>Q06218</id>
        <label>DBP9</label>
    </interactant>
    <organismsDiffer>false</organismsDiffer>
    <experiments>3</experiments>
</comment>
<comment type="interaction">
    <interactant intactId="EBI-6289">
        <id>P36049</id>
    </interactant>
    <interactant intactId="EBI-6170">
        <id>P32892</id>
        <label>DRS1</label>
    </interactant>
    <organismsDiffer>false</organismsDiffer>
    <experiments>3</experiments>
</comment>
<comment type="interaction">
    <interactant intactId="EBI-6289">
        <id>P36049</id>
    </interactant>
    <interactant intactId="EBI-6289">
        <id>P36049</id>
        <label>EBP2</label>
    </interactant>
    <organismsDiffer>false</organismsDiffer>
    <experiments>3</experiments>
</comment>
<comment type="interaction">
    <interactant intactId="EBI-6289">
        <id>P36049</id>
    </interactant>
    <interactant intactId="EBI-6951">
        <id>P38911</id>
        <label>FPR3</label>
    </interactant>
    <organismsDiffer>false</organismsDiffer>
    <experiments>3</experiments>
</comment>
<comment type="interaction">
    <interactant intactId="EBI-6289">
        <id>P36049</id>
    </interactant>
    <interactant intactId="EBI-6956">
        <id>Q06205</id>
        <label>FPR4</label>
    </interactant>
    <organismsDiffer>false</organismsDiffer>
    <experiments>3</experiments>
</comment>
<comment type="interaction">
    <interactant intactId="EBI-6289">
        <id>P36049</id>
    </interactant>
    <interactant intactId="EBI-8170">
        <id>Q03532</id>
        <label>HAS1</label>
    </interactant>
    <organismsDiffer>false</organismsDiffer>
    <experiments>3</experiments>
</comment>
<comment type="interaction">
    <interactant intactId="EBI-6289">
        <id>P36049</id>
    </interactant>
    <interactant intactId="EBI-22906">
        <id>P43586</id>
        <label>LOC1</label>
    </interactant>
    <organismsDiffer>false</organismsDiffer>
    <experiments>7</experiments>
</comment>
<comment type="interaction">
    <interactant intactId="EBI-6289">
        <id>P36049</id>
    </interactant>
    <interactant intactId="EBI-25811">
        <id>P47069</id>
        <label>MPS3</label>
    </interactant>
    <organismsDiffer>false</organismsDiffer>
    <experiments>4</experiments>
</comment>
<comment type="interaction">
    <interactant intactId="EBI-6289">
        <id>P36049</id>
    </interactant>
    <interactant intactId="EBI-29259">
        <id>P39744</id>
        <label>NOC2</label>
    </interactant>
    <organismsDiffer>false</organismsDiffer>
    <experiments>4</experiments>
</comment>
<comment type="interaction">
    <interactant intactId="EBI-6289">
        <id>P36049</id>
    </interactant>
    <interactant intactId="EBI-36093">
        <id>Q07896</id>
        <label>NOC3</label>
    </interactant>
    <organismsDiffer>false</organismsDiffer>
    <experiments>3</experiments>
</comment>
<comment type="interaction">
    <interactant intactId="EBI-6289">
        <id>P36049</id>
    </interactant>
    <interactant intactId="EBI-35895">
        <id>Q08208</id>
        <label>NOP12</label>
    </interactant>
    <organismsDiffer>false</organismsDiffer>
    <experiments>3</experiments>
</comment>
<comment type="interaction">
    <interactant intactId="EBI-6289">
        <id>P36049</id>
    </interactant>
    <interactant intactId="EBI-22439">
        <id>P40007</id>
        <label>NOP16</label>
    </interactant>
    <organismsDiffer>false</organismsDiffer>
    <experiments>3</experiments>
</comment>
<comment type="interaction">
    <interactant intactId="EBI-6289">
        <id>P36049</id>
    </interactant>
    <interactant intactId="EBI-12122">
        <id>P37838</id>
        <label>NOP4</label>
    </interactant>
    <organismsDiffer>false</organismsDiffer>
    <experiments>6</experiments>
</comment>
<comment type="interaction">
    <interactant intactId="EBI-6289">
        <id>P36049</id>
    </interactant>
    <interactant intactId="EBI-22681">
        <id>P40078</id>
        <label>NSA2</label>
    </interactant>
    <organismsDiffer>false</organismsDiffer>
    <experiments>4</experiments>
</comment>
<comment type="interaction">
    <interactant intactId="EBI-6289">
        <id>P36049</id>
    </interactant>
    <interactant intactId="EBI-22449">
        <id>P40010</id>
        <label>NUG1</label>
    </interactant>
    <organismsDiffer>false</organismsDiffer>
    <experiments>3</experiments>
</comment>
<comment type="interaction">
    <interactant intactId="EBI-6289">
        <id>P36049</id>
    </interactant>
    <interactant intactId="EBI-505">
        <id>P53131</id>
        <label>PRP43</label>
    </interactant>
    <organismsDiffer>false</organismsDiffer>
    <experiments>3</experiments>
</comment>
<comment type="interaction">
    <interactant intactId="EBI-6289">
        <id>P36049</id>
    </interactant>
    <interactant intactId="EBI-30678">
        <id>Q12754</id>
        <label>RRP12</label>
    </interactant>
    <organismsDiffer>false</organismsDiffer>
    <experiments>3</experiments>
</comment>
<comment type="interaction">
    <interactant intactId="EBI-6289">
        <id>P36049</id>
    </interactant>
    <interactant intactId="EBI-26762">
        <id>P36080</id>
        <label>RRP14</label>
    </interactant>
    <organismsDiffer>false</organismsDiffer>
    <experiments>3</experiments>
</comment>
<comment type="interaction">
    <interactant intactId="EBI-6289">
        <id>P36049</id>
    </interactant>
    <interactant intactId="EBI-16026">
        <id>Q08746</id>
        <label>RRS1</label>
    </interactant>
    <organismsDiffer>false</organismsDiffer>
    <experiments>4</experiments>
</comment>
<comment type="interaction">
    <interactant intactId="EBI-6289">
        <id>P36049</id>
    </interactant>
    <interactant intactId="EBI-17814">
        <id>P25582</id>
        <label>SPB1</label>
    </interactant>
    <organismsDiffer>false</organismsDiffer>
    <experiments>3</experiments>
</comment>
<comment type="interaction">
    <interactant intactId="EBI-6289">
        <id>P36049</id>
    </interactant>
    <interactant intactId="EBI-17819">
        <id>P25808</id>
        <label>SPB4</label>
    </interactant>
    <organismsDiffer>false</organismsDiffer>
    <experiments>3</experiments>
</comment>
<comment type="interaction">
    <interactant intactId="EBI-6289">
        <id>P36049</id>
    </interactant>
    <interactant intactId="EBI-18160">
        <id>P38789</id>
        <label>SSF1</label>
    </interactant>
    <organismsDiffer>false</organismsDiffer>
    <experiments>4</experiments>
</comment>
<comment type="interaction">
    <interactant intactId="EBI-6289">
        <id>P36049</id>
    </interactant>
    <interactant intactId="EBI-34720">
        <id>Q08687</id>
        <label>TMA16</label>
    </interactant>
    <organismsDiffer>false</organismsDiffer>
    <experiments>3</experiments>
</comment>
<comment type="subcellular location">
    <subcellularLocation>
        <location evidence="3 4">Nucleus</location>
        <location evidence="3 4">Nucleolus</location>
    </subcellularLocation>
</comment>
<comment type="PTM">
    <text evidence="5">Sumoylated.</text>
</comment>
<comment type="similarity">
    <text evidence="6">Belongs to the EBP2 family.</text>
</comment>